<reference key="1">
    <citation type="journal article" date="2014" name="Stand. Genomic Sci.">
        <title>Complete genome sequence of Anabaena variabilis ATCC 29413.</title>
        <authorList>
            <person name="Thiel T."/>
            <person name="Pratte B.S."/>
            <person name="Zhong J."/>
            <person name="Goodwin L."/>
            <person name="Copeland A."/>
            <person name="Lucas S."/>
            <person name="Han C."/>
            <person name="Pitluck S."/>
            <person name="Land M.L."/>
            <person name="Kyrpides N.C."/>
            <person name="Woyke T."/>
        </authorList>
    </citation>
    <scope>NUCLEOTIDE SEQUENCE [LARGE SCALE GENOMIC DNA]</scope>
    <source>
        <strain>ATCC 29413 / PCC 7937</strain>
    </source>
</reference>
<name>RTCA_TRIV2</name>
<sequence>MIDIDGSYGEGGGQVLRTSLSLAAITGEPIRIAGIRAGRRKPGLAAQHLTAVRAAARICHGELQGDALGSTMLEFIPGGGVKAGNYIFDVSEVQQGGSAGAITLVLQTILLPLALADGDSHITLRGGTHVIFSPTVTYIERVYLPMLCRMGIKAQVKLGAWGWYPRGGGEVNLQVKGGCQLCGLNLLERGELKRVQGLAVATELPAHIPQRMANRAENLLRTAGLRVSMQALREKGVAPGAGIFLTAEYCNSLTGFGGFGRLRLSSEKVAEIACGQLLQFHETGAPVDEHLADQLLLPAALASESSQYRVAEVSTHLTTNAAVIEKFGLGKITVNQAERVVAIASDKT</sequence>
<comment type="function">
    <text evidence="1">Catalyzes the conversion of 3'-phosphate to a 2',3'-cyclic phosphodiester at the end of RNA. The mechanism of action of the enzyme occurs in 3 steps: (A) adenylation of the enzyme by ATP; (B) transfer of adenylate to an RNA-N3'P to produce RNA-N3'PP5'A; (C) and attack of the adjacent 2'-hydroxyl on the 3'-phosphorus in the diester linkage to produce the cyclic end product. The biological role of this enzyme is unknown but it is likely to function in some aspects of cellular RNA processing.</text>
</comment>
<comment type="catalytic activity">
    <reaction evidence="1">
        <text>a 3'-end 3'-phospho-ribonucleotide-RNA + ATP = a 3'-end 2',3'-cyclophospho-ribonucleotide-RNA + AMP + diphosphate</text>
        <dbReference type="Rhea" id="RHEA:23976"/>
        <dbReference type="Rhea" id="RHEA-COMP:10463"/>
        <dbReference type="Rhea" id="RHEA-COMP:10464"/>
        <dbReference type="ChEBI" id="CHEBI:30616"/>
        <dbReference type="ChEBI" id="CHEBI:33019"/>
        <dbReference type="ChEBI" id="CHEBI:83062"/>
        <dbReference type="ChEBI" id="CHEBI:83064"/>
        <dbReference type="ChEBI" id="CHEBI:456215"/>
        <dbReference type="EC" id="6.5.1.4"/>
    </reaction>
</comment>
<comment type="subcellular location">
    <subcellularLocation>
        <location evidence="1">Cytoplasm</location>
    </subcellularLocation>
</comment>
<comment type="similarity">
    <text evidence="1">Belongs to the RNA 3'-terminal cyclase family. Type 1 subfamily.</text>
</comment>
<protein>
    <recommendedName>
        <fullName evidence="1">RNA 3'-terminal phosphate cyclase</fullName>
        <shortName evidence="1">RNA cyclase</shortName>
        <shortName evidence="1">RNA-3'-phosphate cyclase</shortName>
        <ecNumber evidence="1">6.5.1.4</ecNumber>
    </recommendedName>
</protein>
<gene>
    <name evidence="1" type="primary">rtcA</name>
    <name type="ordered locus">Ava_3770</name>
</gene>
<feature type="chain" id="PRO_0000264793" description="RNA 3'-terminal phosphate cyclase">
    <location>
        <begin position="1"/>
        <end position="348"/>
    </location>
</feature>
<feature type="active site" description="Tele-AMP-histidine intermediate" evidence="1">
    <location>
        <position position="316"/>
    </location>
</feature>
<feature type="binding site" evidence="1">
    <location>
        <position position="107"/>
    </location>
    <ligand>
        <name>ATP</name>
        <dbReference type="ChEBI" id="CHEBI:30616"/>
    </ligand>
</feature>
<feature type="binding site" evidence="1">
    <location>
        <begin position="290"/>
        <end position="294"/>
    </location>
    <ligand>
        <name>ATP</name>
        <dbReference type="ChEBI" id="CHEBI:30616"/>
    </ligand>
</feature>
<dbReference type="EC" id="6.5.1.4" evidence="1"/>
<dbReference type="EMBL" id="CP000117">
    <property type="protein sequence ID" value="ABA23375.1"/>
    <property type="molecule type" value="Genomic_DNA"/>
</dbReference>
<dbReference type="SMR" id="Q3M6L1"/>
<dbReference type="STRING" id="240292.Ava_3770"/>
<dbReference type="KEGG" id="ava:Ava_3770"/>
<dbReference type="eggNOG" id="COG0430">
    <property type="taxonomic scope" value="Bacteria"/>
</dbReference>
<dbReference type="HOGENOM" id="CLU_027882_0_0_3"/>
<dbReference type="Proteomes" id="UP000002533">
    <property type="component" value="Chromosome"/>
</dbReference>
<dbReference type="GO" id="GO:0005737">
    <property type="term" value="C:cytoplasm"/>
    <property type="evidence" value="ECO:0007669"/>
    <property type="project" value="UniProtKB-SubCell"/>
</dbReference>
<dbReference type="GO" id="GO:0005524">
    <property type="term" value="F:ATP binding"/>
    <property type="evidence" value="ECO:0007669"/>
    <property type="project" value="UniProtKB-KW"/>
</dbReference>
<dbReference type="GO" id="GO:0003963">
    <property type="term" value="F:RNA-3'-phosphate cyclase activity"/>
    <property type="evidence" value="ECO:0007669"/>
    <property type="project" value="UniProtKB-UniRule"/>
</dbReference>
<dbReference type="GO" id="GO:0006396">
    <property type="term" value="P:RNA processing"/>
    <property type="evidence" value="ECO:0007669"/>
    <property type="project" value="InterPro"/>
</dbReference>
<dbReference type="CDD" id="cd00874">
    <property type="entry name" value="RNA_Cyclase_Class_II"/>
    <property type="match status" value="1"/>
</dbReference>
<dbReference type="Gene3D" id="3.65.10.20">
    <property type="entry name" value="RNA 3'-terminal phosphate cyclase domain"/>
    <property type="match status" value="1"/>
</dbReference>
<dbReference type="Gene3D" id="3.30.360.20">
    <property type="entry name" value="RNA 3'-terminal phosphate cyclase, insert domain"/>
    <property type="match status" value="1"/>
</dbReference>
<dbReference type="HAMAP" id="MF_00200">
    <property type="entry name" value="RTC"/>
    <property type="match status" value="1"/>
</dbReference>
<dbReference type="InterPro" id="IPR013791">
    <property type="entry name" value="RNA3'-term_phos_cycl_insert"/>
</dbReference>
<dbReference type="InterPro" id="IPR023797">
    <property type="entry name" value="RNA3'_phos_cyclase_dom"/>
</dbReference>
<dbReference type="InterPro" id="IPR037136">
    <property type="entry name" value="RNA3'_phos_cyclase_dom_sf"/>
</dbReference>
<dbReference type="InterPro" id="IPR000228">
    <property type="entry name" value="RNA3'_term_phos_cyc"/>
</dbReference>
<dbReference type="InterPro" id="IPR017770">
    <property type="entry name" value="RNA3'_term_phos_cyc_type_1"/>
</dbReference>
<dbReference type="InterPro" id="IPR013792">
    <property type="entry name" value="RNA3'P_cycl/enolpyr_Trfase_a/b"/>
</dbReference>
<dbReference type="InterPro" id="IPR036553">
    <property type="entry name" value="RPTC_insert"/>
</dbReference>
<dbReference type="NCBIfam" id="NF003246">
    <property type="entry name" value="PRK04204.1-2"/>
    <property type="match status" value="1"/>
</dbReference>
<dbReference type="NCBIfam" id="TIGR03399">
    <property type="entry name" value="RNA_3prim_cycl"/>
    <property type="match status" value="1"/>
</dbReference>
<dbReference type="PANTHER" id="PTHR11096">
    <property type="entry name" value="RNA 3' TERMINAL PHOSPHATE CYCLASE"/>
    <property type="match status" value="1"/>
</dbReference>
<dbReference type="PANTHER" id="PTHR11096:SF0">
    <property type="entry name" value="RNA 3'-TERMINAL PHOSPHATE CYCLASE"/>
    <property type="match status" value="1"/>
</dbReference>
<dbReference type="Pfam" id="PF01137">
    <property type="entry name" value="RTC"/>
    <property type="match status" value="1"/>
</dbReference>
<dbReference type="Pfam" id="PF05189">
    <property type="entry name" value="RTC_insert"/>
    <property type="match status" value="1"/>
</dbReference>
<dbReference type="PIRSF" id="PIRSF005378">
    <property type="entry name" value="RNA3'_term_phos_cycl_euk"/>
    <property type="match status" value="1"/>
</dbReference>
<dbReference type="SUPFAM" id="SSF55205">
    <property type="entry name" value="EPT/RTPC-like"/>
    <property type="match status" value="1"/>
</dbReference>
<dbReference type="SUPFAM" id="SSF52913">
    <property type="entry name" value="RNA 3'-terminal phosphate cyclase, RPTC, insert domain"/>
    <property type="match status" value="1"/>
</dbReference>
<evidence type="ECO:0000255" key="1">
    <source>
        <dbReference type="HAMAP-Rule" id="MF_00200"/>
    </source>
</evidence>
<organism>
    <name type="scientific">Trichormus variabilis (strain ATCC 29413 / PCC 7937)</name>
    <name type="common">Anabaena variabilis</name>
    <dbReference type="NCBI Taxonomy" id="240292"/>
    <lineage>
        <taxon>Bacteria</taxon>
        <taxon>Bacillati</taxon>
        <taxon>Cyanobacteriota</taxon>
        <taxon>Cyanophyceae</taxon>
        <taxon>Nostocales</taxon>
        <taxon>Nostocaceae</taxon>
        <taxon>Trichormus</taxon>
    </lineage>
</organism>
<accession>Q3M6L1</accession>
<proteinExistence type="inferred from homology"/>
<keyword id="KW-0067">ATP-binding</keyword>
<keyword id="KW-0963">Cytoplasm</keyword>
<keyword id="KW-0436">Ligase</keyword>
<keyword id="KW-0547">Nucleotide-binding</keyword>